<name>CAF1M_ARATH</name>
<sequence>MFLIRLSRHNPSSFTLLTRRLHDQTISSSRLRDLYNFQSPPPLSSSASENPDFNQKNNNKKKPKPQYRPPSSLEGVKTVHSDLPFDFRFSYTESCSNVRPIGLREPKYSPFGPDRLDREWTGVCAPAVNPKVESVDGVEDPKLEEKRRKVREKIQGASLTEAERKFLVELCQRNKTKRQVNLGRDGLTHNMLNDVYNHWKHAEAVRVKCLGVPTLDMKNVIFHLEDKTFGQVVSKHSGTLVLYRGRNYDPKKRPKIPLMLWKPHEPVYPRLIKTTIDGLSIDETKAMRKKGLAVPALTKLAKNGYYGSLVPMVRDAFLVSELVRIDCLGLERKDYKKIGAKLRDLVPCILVTFDKEQVVIWRGKDYKPPKEDDEYSSFIHRESSIDSDVDLSCSRGAQDSPDETT</sequence>
<reference key="1">
    <citation type="journal article" date="1999" name="Nature">
        <title>Sequence and analysis of chromosome 4 of the plant Arabidopsis thaliana.</title>
        <authorList>
            <person name="Mayer K.F.X."/>
            <person name="Schueller C."/>
            <person name="Wambutt R."/>
            <person name="Murphy G."/>
            <person name="Volckaert G."/>
            <person name="Pohl T."/>
            <person name="Duesterhoeft A."/>
            <person name="Stiekema W."/>
            <person name="Entian K.-D."/>
            <person name="Terryn N."/>
            <person name="Harris B."/>
            <person name="Ansorge W."/>
            <person name="Brandt P."/>
            <person name="Grivell L.A."/>
            <person name="Rieger M."/>
            <person name="Weichselgartner M."/>
            <person name="de Simone V."/>
            <person name="Obermaier B."/>
            <person name="Mache R."/>
            <person name="Mueller M."/>
            <person name="Kreis M."/>
            <person name="Delseny M."/>
            <person name="Puigdomenech P."/>
            <person name="Watson M."/>
            <person name="Schmidtheini T."/>
            <person name="Reichert B."/>
            <person name="Portetelle D."/>
            <person name="Perez-Alonso M."/>
            <person name="Boutry M."/>
            <person name="Bancroft I."/>
            <person name="Vos P."/>
            <person name="Hoheisel J."/>
            <person name="Zimmermann W."/>
            <person name="Wedler H."/>
            <person name="Ridley P."/>
            <person name="Langham S.-A."/>
            <person name="McCullagh B."/>
            <person name="Bilham L."/>
            <person name="Robben J."/>
            <person name="van der Schueren J."/>
            <person name="Grymonprez B."/>
            <person name="Chuang Y.-J."/>
            <person name="Vandenbussche F."/>
            <person name="Braeken M."/>
            <person name="Weltjens I."/>
            <person name="Voet M."/>
            <person name="Bastiaens I."/>
            <person name="Aert R."/>
            <person name="Defoor E."/>
            <person name="Weitzenegger T."/>
            <person name="Bothe G."/>
            <person name="Ramsperger U."/>
            <person name="Hilbert H."/>
            <person name="Braun M."/>
            <person name="Holzer E."/>
            <person name="Brandt A."/>
            <person name="Peters S."/>
            <person name="van Staveren M."/>
            <person name="Dirkse W."/>
            <person name="Mooijman P."/>
            <person name="Klein Lankhorst R."/>
            <person name="Rose M."/>
            <person name="Hauf J."/>
            <person name="Koetter P."/>
            <person name="Berneiser S."/>
            <person name="Hempel S."/>
            <person name="Feldpausch M."/>
            <person name="Lamberth S."/>
            <person name="Van den Daele H."/>
            <person name="De Keyser A."/>
            <person name="Buysshaert C."/>
            <person name="Gielen J."/>
            <person name="Villarroel R."/>
            <person name="De Clercq R."/>
            <person name="van Montagu M."/>
            <person name="Rogers J."/>
            <person name="Cronin A."/>
            <person name="Quail M.A."/>
            <person name="Bray-Allen S."/>
            <person name="Clark L."/>
            <person name="Doggett J."/>
            <person name="Hall S."/>
            <person name="Kay M."/>
            <person name="Lennard N."/>
            <person name="McLay K."/>
            <person name="Mayes R."/>
            <person name="Pettett A."/>
            <person name="Rajandream M.A."/>
            <person name="Lyne M."/>
            <person name="Benes V."/>
            <person name="Rechmann S."/>
            <person name="Borkova D."/>
            <person name="Bloecker H."/>
            <person name="Scharfe M."/>
            <person name="Grimm M."/>
            <person name="Loehnert T.-H."/>
            <person name="Dose S."/>
            <person name="de Haan M."/>
            <person name="Maarse A.C."/>
            <person name="Schaefer M."/>
            <person name="Mueller-Auer S."/>
            <person name="Gabel C."/>
            <person name="Fuchs M."/>
            <person name="Fartmann B."/>
            <person name="Granderath K."/>
            <person name="Dauner D."/>
            <person name="Herzl A."/>
            <person name="Neumann S."/>
            <person name="Argiriou A."/>
            <person name="Vitale D."/>
            <person name="Liguori R."/>
            <person name="Piravandi E."/>
            <person name="Massenet O."/>
            <person name="Quigley F."/>
            <person name="Clabauld G."/>
            <person name="Muendlein A."/>
            <person name="Felber R."/>
            <person name="Schnabl S."/>
            <person name="Hiller R."/>
            <person name="Schmidt W."/>
            <person name="Lecharny A."/>
            <person name="Aubourg S."/>
            <person name="Chefdor F."/>
            <person name="Cooke R."/>
            <person name="Berger C."/>
            <person name="Monfort A."/>
            <person name="Casacuberta E."/>
            <person name="Gibbons T."/>
            <person name="Weber N."/>
            <person name="Vandenbol M."/>
            <person name="Bargues M."/>
            <person name="Terol J."/>
            <person name="Torres A."/>
            <person name="Perez-Perez A."/>
            <person name="Purnelle B."/>
            <person name="Bent E."/>
            <person name="Johnson S."/>
            <person name="Tacon D."/>
            <person name="Jesse T."/>
            <person name="Heijnen L."/>
            <person name="Schwarz S."/>
            <person name="Scholler P."/>
            <person name="Heber S."/>
            <person name="Francs P."/>
            <person name="Bielke C."/>
            <person name="Frishman D."/>
            <person name="Haase D."/>
            <person name="Lemcke K."/>
            <person name="Mewes H.-W."/>
            <person name="Stocker S."/>
            <person name="Zaccaria P."/>
            <person name="Bevan M."/>
            <person name="Wilson R.K."/>
            <person name="de la Bastide M."/>
            <person name="Habermann K."/>
            <person name="Parnell L."/>
            <person name="Dedhia N."/>
            <person name="Gnoj L."/>
            <person name="Schutz K."/>
            <person name="Huang E."/>
            <person name="Spiegel L."/>
            <person name="Sekhon M."/>
            <person name="Murray J."/>
            <person name="Sheet P."/>
            <person name="Cordes M."/>
            <person name="Abu-Threideh J."/>
            <person name="Stoneking T."/>
            <person name="Kalicki J."/>
            <person name="Graves T."/>
            <person name="Harmon G."/>
            <person name="Edwards J."/>
            <person name="Latreille P."/>
            <person name="Courtney L."/>
            <person name="Cloud J."/>
            <person name="Abbott A."/>
            <person name="Scott K."/>
            <person name="Johnson D."/>
            <person name="Minx P."/>
            <person name="Bentley D."/>
            <person name="Fulton B."/>
            <person name="Miller N."/>
            <person name="Greco T."/>
            <person name="Kemp K."/>
            <person name="Kramer J."/>
            <person name="Fulton L."/>
            <person name="Mardis E."/>
            <person name="Dante M."/>
            <person name="Pepin K."/>
            <person name="Hillier L.W."/>
            <person name="Nelson J."/>
            <person name="Spieth J."/>
            <person name="Ryan E."/>
            <person name="Andrews S."/>
            <person name="Geisel C."/>
            <person name="Layman D."/>
            <person name="Du H."/>
            <person name="Ali J."/>
            <person name="Berghoff A."/>
            <person name="Jones K."/>
            <person name="Drone K."/>
            <person name="Cotton M."/>
            <person name="Joshu C."/>
            <person name="Antonoiu B."/>
            <person name="Zidanic M."/>
            <person name="Strong C."/>
            <person name="Sun H."/>
            <person name="Lamar B."/>
            <person name="Yordan C."/>
            <person name="Ma P."/>
            <person name="Zhong J."/>
            <person name="Preston R."/>
            <person name="Vil D."/>
            <person name="Shekher M."/>
            <person name="Matero A."/>
            <person name="Shah R."/>
            <person name="Swaby I.K."/>
            <person name="O'Shaughnessy A."/>
            <person name="Rodriguez M."/>
            <person name="Hoffman J."/>
            <person name="Till S."/>
            <person name="Granat S."/>
            <person name="Shohdy N."/>
            <person name="Hasegawa A."/>
            <person name="Hameed A."/>
            <person name="Lodhi M."/>
            <person name="Johnson A."/>
            <person name="Chen E."/>
            <person name="Marra M.A."/>
            <person name="Martienssen R."/>
            <person name="McCombie W.R."/>
        </authorList>
    </citation>
    <scope>NUCLEOTIDE SEQUENCE [LARGE SCALE GENOMIC DNA]</scope>
    <source>
        <strain>cv. Columbia</strain>
    </source>
</reference>
<reference key="2">
    <citation type="journal article" date="2017" name="Plant J.">
        <title>Araport11: a complete reannotation of the Arabidopsis thaliana reference genome.</title>
        <authorList>
            <person name="Cheng C.Y."/>
            <person name="Krishnakumar V."/>
            <person name="Chan A.P."/>
            <person name="Thibaud-Nissen F."/>
            <person name="Schobel S."/>
            <person name="Town C.D."/>
        </authorList>
    </citation>
    <scope>GENOME REANNOTATION</scope>
    <source>
        <strain>cv. Columbia</strain>
    </source>
</reference>
<reference key="3">
    <citation type="journal article" date="2003" name="Science">
        <title>Empirical analysis of transcriptional activity in the Arabidopsis genome.</title>
        <authorList>
            <person name="Yamada K."/>
            <person name="Lim J."/>
            <person name="Dale J.M."/>
            <person name="Chen H."/>
            <person name="Shinn P."/>
            <person name="Palm C.J."/>
            <person name="Southwick A.M."/>
            <person name="Wu H.C."/>
            <person name="Kim C.J."/>
            <person name="Nguyen M."/>
            <person name="Pham P.K."/>
            <person name="Cheuk R.F."/>
            <person name="Karlin-Newmann G."/>
            <person name="Liu S.X."/>
            <person name="Lam B."/>
            <person name="Sakano H."/>
            <person name="Wu T."/>
            <person name="Yu G."/>
            <person name="Miranda M."/>
            <person name="Quach H.L."/>
            <person name="Tripp M."/>
            <person name="Chang C.H."/>
            <person name="Lee J.M."/>
            <person name="Toriumi M.J."/>
            <person name="Chan M.M."/>
            <person name="Tang C.C."/>
            <person name="Onodera C.S."/>
            <person name="Deng J.M."/>
            <person name="Akiyama K."/>
            <person name="Ansari Y."/>
            <person name="Arakawa T."/>
            <person name="Banh J."/>
            <person name="Banno F."/>
            <person name="Bowser L."/>
            <person name="Brooks S.Y."/>
            <person name="Carninci P."/>
            <person name="Chao Q."/>
            <person name="Choy N."/>
            <person name="Enju A."/>
            <person name="Goldsmith A.D."/>
            <person name="Gurjal M."/>
            <person name="Hansen N.F."/>
            <person name="Hayashizaki Y."/>
            <person name="Johnson-Hopson C."/>
            <person name="Hsuan V.W."/>
            <person name="Iida K."/>
            <person name="Karnes M."/>
            <person name="Khan S."/>
            <person name="Koesema E."/>
            <person name="Ishida J."/>
            <person name="Jiang P.X."/>
            <person name="Jones T."/>
            <person name="Kawai J."/>
            <person name="Kamiya A."/>
            <person name="Meyers C."/>
            <person name="Nakajima M."/>
            <person name="Narusaka M."/>
            <person name="Seki M."/>
            <person name="Sakurai T."/>
            <person name="Satou M."/>
            <person name="Tamse R."/>
            <person name="Vaysberg M."/>
            <person name="Wallender E.K."/>
            <person name="Wong C."/>
            <person name="Yamamura Y."/>
            <person name="Yuan S."/>
            <person name="Shinozaki K."/>
            <person name="Davis R.W."/>
            <person name="Theologis A."/>
            <person name="Ecker J.R."/>
        </authorList>
    </citation>
    <scope>NUCLEOTIDE SEQUENCE [LARGE SCALE MRNA]</scope>
    <source>
        <strain>cv. Columbia</strain>
    </source>
</reference>
<keyword id="KW-0025">Alternative splicing</keyword>
<keyword id="KW-0496">Mitochondrion</keyword>
<keyword id="KW-0507">mRNA processing</keyword>
<keyword id="KW-0508">mRNA splicing</keyword>
<keyword id="KW-1185">Reference proteome</keyword>
<keyword id="KW-0677">Repeat</keyword>
<keyword id="KW-0687">Ribonucleoprotein</keyword>
<keyword id="KW-0694">RNA-binding</keyword>
<keyword id="KW-0809">Transit peptide</keyword>
<dbReference type="EMBL" id="AL022198">
    <property type="protein sequence ID" value="CAA18192.1"/>
    <property type="status" value="ALT_SEQ"/>
    <property type="molecule type" value="Genomic_DNA"/>
</dbReference>
<dbReference type="EMBL" id="AL161578">
    <property type="protein sequence ID" value="CAB79819.1"/>
    <property type="status" value="ALT_SEQ"/>
    <property type="molecule type" value="Genomic_DNA"/>
</dbReference>
<dbReference type="EMBL" id="CP002687">
    <property type="protein sequence ID" value="AEE85846.1"/>
    <property type="molecule type" value="Genomic_DNA"/>
</dbReference>
<dbReference type="EMBL" id="AY042864">
    <property type="protein sequence ID" value="AAK68804.1"/>
    <property type="molecule type" value="mRNA"/>
</dbReference>
<dbReference type="EMBL" id="AY072146">
    <property type="protein sequence ID" value="AAL59968.1"/>
    <property type="molecule type" value="mRNA"/>
</dbReference>
<dbReference type="EMBL" id="AY096489">
    <property type="protein sequence ID" value="AAM20129.1"/>
    <property type="molecule type" value="mRNA"/>
</dbReference>
<dbReference type="PIR" id="B85363">
    <property type="entry name" value="B85363"/>
</dbReference>
<dbReference type="RefSeq" id="NP_194830.2">
    <molecule id="Q8VYD9-1"/>
    <property type="nucleotide sequence ID" value="NM_119251.5"/>
</dbReference>
<dbReference type="SMR" id="Q8VYD9"/>
<dbReference type="FunCoup" id="Q8VYD9">
    <property type="interactions" value="1478"/>
</dbReference>
<dbReference type="STRING" id="3702.Q8VYD9"/>
<dbReference type="PaxDb" id="3702-AT4G31010.1"/>
<dbReference type="ProteomicsDB" id="239090">
    <molecule id="Q8VYD9-1"/>
</dbReference>
<dbReference type="EnsemblPlants" id="AT4G31010.1">
    <molecule id="Q8VYD9-1"/>
    <property type="protein sequence ID" value="AT4G31010.1"/>
    <property type="gene ID" value="AT4G31010"/>
</dbReference>
<dbReference type="GeneID" id="829228"/>
<dbReference type="Gramene" id="AT4G31010.1">
    <molecule id="Q8VYD9-1"/>
    <property type="protein sequence ID" value="AT4G31010.1"/>
    <property type="gene ID" value="AT4G31010"/>
</dbReference>
<dbReference type="KEGG" id="ath:AT4G31010"/>
<dbReference type="Araport" id="AT4G31010"/>
<dbReference type="TAIR" id="AT4G31010">
    <property type="gene designation" value="MCSF1"/>
</dbReference>
<dbReference type="eggNOG" id="ENOG502QQI8">
    <property type="taxonomic scope" value="Eukaryota"/>
</dbReference>
<dbReference type="HOGENOM" id="CLU_053415_1_0_1"/>
<dbReference type="InParanoid" id="Q8VYD9"/>
<dbReference type="OrthoDB" id="1911210at2759"/>
<dbReference type="PhylomeDB" id="Q8VYD9"/>
<dbReference type="PRO" id="PR:Q8VYD9"/>
<dbReference type="Proteomes" id="UP000006548">
    <property type="component" value="Chromosome 4"/>
</dbReference>
<dbReference type="ExpressionAtlas" id="Q8VYD9">
    <property type="expression patterns" value="baseline and differential"/>
</dbReference>
<dbReference type="GO" id="GO:0005739">
    <property type="term" value="C:mitochondrion"/>
    <property type="evidence" value="ECO:0000314"/>
    <property type="project" value="TAIR"/>
</dbReference>
<dbReference type="GO" id="GO:1990904">
    <property type="term" value="C:ribonucleoprotein complex"/>
    <property type="evidence" value="ECO:0007669"/>
    <property type="project" value="UniProtKB-KW"/>
</dbReference>
<dbReference type="GO" id="GO:0003723">
    <property type="term" value="F:RNA binding"/>
    <property type="evidence" value="ECO:0007669"/>
    <property type="project" value="UniProtKB-KW"/>
</dbReference>
<dbReference type="GO" id="GO:0009793">
    <property type="term" value="P:embryo development ending in seed dormancy"/>
    <property type="evidence" value="ECO:0000315"/>
    <property type="project" value="TAIR"/>
</dbReference>
<dbReference type="GO" id="GO:0000373">
    <property type="term" value="P:Group II intron splicing"/>
    <property type="evidence" value="ECO:0000315"/>
    <property type="project" value="TAIR"/>
</dbReference>
<dbReference type="GO" id="GO:0033617">
    <property type="term" value="P:mitochondrial cytochrome c oxidase assembly"/>
    <property type="evidence" value="ECO:0000315"/>
    <property type="project" value="TAIR"/>
</dbReference>
<dbReference type="GO" id="GO:0032981">
    <property type="term" value="P:mitochondrial respiratory chain complex I assembly"/>
    <property type="evidence" value="ECO:0000315"/>
    <property type="project" value="TAIR"/>
</dbReference>
<dbReference type="GO" id="GO:0006397">
    <property type="term" value="P:mRNA processing"/>
    <property type="evidence" value="ECO:0007669"/>
    <property type="project" value="UniProtKB-KW"/>
</dbReference>
<dbReference type="FunFam" id="3.30.110.60:FF:000002">
    <property type="entry name" value="CRS2-associated factor 1, chloroplastic"/>
    <property type="match status" value="2"/>
</dbReference>
<dbReference type="Gene3D" id="3.30.110.60">
    <property type="entry name" value="YhbY-like"/>
    <property type="match status" value="2"/>
</dbReference>
<dbReference type="InterPro" id="IPR044599">
    <property type="entry name" value="CAF1P_plant"/>
</dbReference>
<dbReference type="InterPro" id="IPR001890">
    <property type="entry name" value="RNA-binding_CRM"/>
</dbReference>
<dbReference type="InterPro" id="IPR035920">
    <property type="entry name" value="YhbY-like_sf"/>
</dbReference>
<dbReference type="PANTHER" id="PTHR46247">
    <property type="entry name" value="CRS2-ASSOCIATED FACTOR 1, CHLOROPLASTIC"/>
    <property type="match status" value="1"/>
</dbReference>
<dbReference type="PANTHER" id="PTHR46247:SF2">
    <property type="entry name" value="CRS2-ASSOCIATED FACTOR 1, MITOCHONDRIAL"/>
    <property type="match status" value="1"/>
</dbReference>
<dbReference type="Pfam" id="PF01985">
    <property type="entry name" value="CRS1_YhbY"/>
    <property type="match status" value="2"/>
</dbReference>
<dbReference type="SMART" id="SM01103">
    <property type="entry name" value="CRS1_YhbY"/>
    <property type="match status" value="2"/>
</dbReference>
<dbReference type="SUPFAM" id="SSF75471">
    <property type="entry name" value="YhbY-like"/>
    <property type="match status" value="2"/>
</dbReference>
<dbReference type="PROSITE" id="PS51295">
    <property type="entry name" value="CRM"/>
    <property type="match status" value="2"/>
</dbReference>
<protein>
    <recommendedName>
        <fullName>CRS2-associated factor 1, mitochondrial</fullName>
    </recommendedName>
</protein>
<comment type="function">
    <text evidence="1">May be involved in the splicing of group IIB introns in mitochondria.</text>
</comment>
<comment type="subunit">
    <text evidence="1">Part of large ribonucleo-protein complexes that include group IIB introns.</text>
</comment>
<comment type="subcellular location">
    <subcellularLocation>
        <location evidence="5">Mitochondrion</location>
    </subcellularLocation>
</comment>
<comment type="alternative products">
    <event type="alternative splicing"/>
    <isoform>
        <id>Q8VYD9-1</id>
        <name>1</name>
        <sequence type="displayed"/>
    </isoform>
    <text>A number of isoforms are produced. According to EST sequences.</text>
</comment>
<comment type="sequence caution" evidence="5">
    <conflict type="erroneous gene model prediction">
        <sequence resource="EMBL-CDS" id="CAA18192"/>
    </conflict>
</comment>
<comment type="sequence caution" evidence="5">
    <conflict type="erroneous gene model prediction">
        <sequence resource="EMBL-CDS" id="CAB79819"/>
    </conflict>
</comment>
<organism>
    <name type="scientific">Arabidopsis thaliana</name>
    <name type="common">Mouse-ear cress</name>
    <dbReference type="NCBI Taxonomy" id="3702"/>
    <lineage>
        <taxon>Eukaryota</taxon>
        <taxon>Viridiplantae</taxon>
        <taxon>Streptophyta</taxon>
        <taxon>Embryophyta</taxon>
        <taxon>Tracheophyta</taxon>
        <taxon>Spermatophyta</taxon>
        <taxon>Magnoliopsida</taxon>
        <taxon>eudicotyledons</taxon>
        <taxon>Gunneridae</taxon>
        <taxon>Pentapetalae</taxon>
        <taxon>rosids</taxon>
        <taxon>malvids</taxon>
        <taxon>Brassicales</taxon>
        <taxon>Brassicaceae</taxon>
        <taxon>Camelineae</taxon>
        <taxon>Arabidopsis</taxon>
    </lineage>
</organism>
<feature type="transit peptide" description="Mitochondrion" evidence="2">
    <location>
        <begin position="1"/>
        <end position="20"/>
    </location>
</feature>
<feature type="chain" id="PRO_0000283617" description="CRS2-associated factor 1, mitochondrial">
    <location>
        <begin position="21"/>
        <end position="405"/>
    </location>
</feature>
<feature type="domain" description="CRM 1" evidence="3">
    <location>
        <begin position="157"/>
        <end position="255"/>
    </location>
</feature>
<feature type="domain" description="CRM 2" evidence="3">
    <location>
        <begin position="277"/>
        <end position="373"/>
    </location>
</feature>
<feature type="region of interest" description="Disordered" evidence="4">
    <location>
        <begin position="32"/>
        <end position="75"/>
    </location>
</feature>
<feature type="region of interest" description="Disordered" evidence="4">
    <location>
        <begin position="384"/>
        <end position="405"/>
    </location>
</feature>
<gene>
    <name type="ordered locus">At4g31010</name>
    <name type="ORF">F6I18.80</name>
</gene>
<evidence type="ECO:0000250" key="1"/>
<evidence type="ECO:0000255" key="2"/>
<evidence type="ECO:0000255" key="3">
    <source>
        <dbReference type="PROSITE-ProRule" id="PRU00626"/>
    </source>
</evidence>
<evidence type="ECO:0000256" key="4">
    <source>
        <dbReference type="SAM" id="MobiDB-lite"/>
    </source>
</evidence>
<evidence type="ECO:0000305" key="5"/>
<proteinExistence type="evidence at transcript level"/>
<accession>Q8VYD9</accession>
<accession>O65549</accession>
<accession>Q94B45</accession>